<reference key="1">
    <citation type="submission" date="1997-07" db="EMBL/GenBank/DDBJ databases">
        <title>Sequence analysis of the 70kb region between 17 and 23 degree of the Bacillus subtilis chromosome.</title>
        <authorList>
            <person name="Haga K."/>
            <person name="Liu H."/>
            <person name="Yasumoto K."/>
            <person name="Takahashi H."/>
            <person name="Yoshikawa H."/>
        </authorList>
    </citation>
    <scope>NUCLEOTIDE SEQUENCE [GENOMIC DNA]</scope>
    <source>
        <strain>168</strain>
    </source>
</reference>
<reference key="2">
    <citation type="journal article" date="1997" name="Nature">
        <title>The complete genome sequence of the Gram-positive bacterium Bacillus subtilis.</title>
        <authorList>
            <person name="Kunst F."/>
            <person name="Ogasawara N."/>
            <person name="Moszer I."/>
            <person name="Albertini A.M."/>
            <person name="Alloni G."/>
            <person name="Azevedo V."/>
            <person name="Bertero M.G."/>
            <person name="Bessieres P."/>
            <person name="Bolotin A."/>
            <person name="Borchert S."/>
            <person name="Borriss R."/>
            <person name="Boursier L."/>
            <person name="Brans A."/>
            <person name="Braun M."/>
            <person name="Brignell S.C."/>
            <person name="Bron S."/>
            <person name="Brouillet S."/>
            <person name="Bruschi C.V."/>
            <person name="Caldwell B."/>
            <person name="Capuano V."/>
            <person name="Carter N.M."/>
            <person name="Choi S.-K."/>
            <person name="Codani J.-J."/>
            <person name="Connerton I.F."/>
            <person name="Cummings N.J."/>
            <person name="Daniel R.A."/>
            <person name="Denizot F."/>
            <person name="Devine K.M."/>
            <person name="Duesterhoeft A."/>
            <person name="Ehrlich S.D."/>
            <person name="Emmerson P.T."/>
            <person name="Entian K.-D."/>
            <person name="Errington J."/>
            <person name="Fabret C."/>
            <person name="Ferrari E."/>
            <person name="Foulger D."/>
            <person name="Fritz C."/>
            <person name="Fujita M."/>
            <person name="Fujita Y."/>
            <person name="Fuma S."/>
            <person name="Galizzi A."/>
            <person name="Galleron N."/>
            <person name="Ghim S.-Y."/>
            <person name="Glaser P."/>
            <person name="Goffeau A."/>
            <person name="Golightly E.J."/>
            <person name="Grandi G."/>
            <person name="Guiseppi G."/>
            <person name="Guy B.J."/>
            <person name="Haga K."/>
            <person name="Haiech J."/>
            <person name="Harwood C.R."/>
            <person name="Henaut A."/>
            <person name="Hilbert H."/>
            <person name="Holsappel S."/>
            <person name="Hosono S."/>
            <person name="Hullo M.-F."/>
            <person name="Itaya M."/>
            <person name="Jones L.-M."/>
            <person name="Joris B."/>
            <person name="Karamata D."/>
            <person name="Kasahara Y."/>
            <person name="Klaerr-Blanchard M."/>
            <person name="Klein C."/>
            <person name="Kobayashi Y."/>
            <person name="Koetter P."/>
            <person name="Koningstein G."/>
            <person name="Krogh S."/>
            <person name="Kumano M."/>
            <person name="Kurita K."/>
            <person name="Lapidus A."/>
            <person name="Lardinois S."/>
            <person name="Lauber J."/>
            <person name="Lazarevic V."/>
            <person name="Lee S.-M."/>
            <person name="Levine A."/>
            <person name="Liu H."/>
            <person name="Masuda S."/>
            <person name="Mauel C."/>
            <person name="Medigue C."/>
            <person name="Medina N."/>
            <person name="Mellado R.P."/>
            <person name="Mizuno M."/>
            <person name="Moestl D."/>
            <person name="Nakai S."/>
            <person name="Noback M."/>
            <person name="Noone D."/>
            <person name="O'Reilly M."/>
            <person name="Ogawa K."/>
            <person name="Ogiwara A."/>
            <person name="Oudega B."/>
            <person name="Park S.-H."/>
            <person name="Parro V."/>
            <person name="Pohl T.M."/>
            <person name="Portetelle D."/>
            <person name="Porwollik S."/>
            <person name="Prescott A.M."/>
            <person name="Presecan E."/>
            <person name="Pujic P."/>
            <person name="Purnelle B."/>
            <person name="Rapoport G."/>
            <person name="Rey M."/>
            <person name="Reynolds S."/>
            <person name="Rieger M."/>
            <person name="Rivolta C."/>
            <person name="Rocha E."/>
            <person name="Roche B."/>
            <person name="Rose M."/>
            <person name="Sadaie Y."/>
            <person name="Sato T."/>
            <person name="Scanlan E."/>
            <person name="Schleich S."/>
            <person name="Schroeter R."/>
            <person name="Scoffone F."/>
            <person name="Sekiguchi J."/>
            <person name="Sekowska A."/>
            <person name="Seror S.J."/>
            <person name="Serror P."/>
            <person name="Shin B.-S."/>
            <person name="Soldo B."/>
            <person name="Sorokin A."/>
            <person name="Tacconi E."/>
            <person name="Takagi T."/>
            <person name="Takahashi H."/>
            <person name="Takemaru K."/>
            <person name="Takeuchi M."/>
            <person name="Tamakoshi A."/>
            <person name="Tanaka T."/>
            <person name="Terpstra P."/>
            <person name="Tognoni A."/>
            <person name="Tosato V."/>
            <person name="Uchiyama S."/>
            <person name="Vandenbol M."/>
            <person name="Vannier F."/>
            <person name="Vassarotti A."/>
            <person name="Viari A."/>
            <person name="Wambutt R."/>
            <person name="Wedler E."/>
            <person name="Wedler H."/>
            <person name="Weitzenegger T."/>
            <person name="Winters P."/>
            <person name="Wipat A."/>
            <person name="Yamamoto H."/>
            <person name="Yamane K."/>
            <person name="Yasumoto K."/>
            <person name="Yata K."/>
            <person name="Yoshida K."/>
            <person name="Yoshikawa H.-F."/>
            <person name="Zumstein E."/>
            <person name="Yoshikawa H."/>
            <person name="Danchin A."/>
        </authorList>
    </citation>
    <scope>NUCLEOTIDE SEQUENCE [LARGE SCALE GENOMIC DNA]</scope>
    <source>
        <strain>168</strain>
    </source>
</reference>
<reference key="3">
    <citation type="journal article" date="2010" name="Proc. Natl. Acad. Sci. U.S.A.">
        <title>Imaging mass spectrometry of intraspecies metabolic exchange revealed the cannibalistic factors of Bacillus subtilis.</title>
        <authorList>
            <person name="Liu W.T."/>
            <person name="Yang Y.L."/>
            <person name="Xu Y."/>
            <person name="Lamsa A."/>
            <person name="Haste N.M."/>
            <person name="Yang J.Y."/>
            <person name="Ng J."/>
            <person name="Gonzalez D."/>
            <person name="Ellermeier C.D."/>
            <person name="Straight P.D."/>
            <person name="Pevzner P.A."/>
            <person name="Pogliano J."/>
            <person name="Nizet V."/>
            <person name="Pogliano K."/>
            <person name="Dorrestein P.C."/>
        </authorList>
    </citation>
    <scope>PROTEIN SEQUENCE OF 30-55</scope>
    <scope>FUNCTION</scope>
    <scope>IDENTIFICATION OF ACTIVE PEPTIDE</scope>
    <scope>SUBCELLULAR LOCATION</scope>
    <scope>MASS SPECTROMETRY</scope>
    <scope>DISULFIDE BOND</scope>
    <scope>THIOETHER BOND</scope>
    <scope>CROSS-LINK</scope>
    <scope>DISRUPTION PHENOTYPE</scope>
    <source>
        <strain>168 / PY79</strain>
    </source>
</reference>
<reference key="4">
    <citation type="journal article" date="2001" name="J. Appl. Microbiol.">
        <title>A 3.1-kb genomic fragment of Bacillus subtilis encodes the protein inhibiting growth of Xanthomonas oryzae pv. oryzae.</title>
        <authorList>
            <person name="Lin D."/>
            <person name="Qu L.-J."/>
            <person name="Gu H."/>
            <person name="Chen Z."/>
        </authorList>
    </citation>
    <scope>INHIBITION OF XANTHOMONAS GROWTH</scope>
    <source>
        <strain>168 / SO113</strain>
    </source>
</reference>
<reference key="5">
    <citation type="journal article" date="2003" name="Science">
        <title>Cannibalism by sporulating bacteria.</title>
        <authorList>
            <person name="Gonzalez-Pastor J.E."/>
            <person name="Hobbs E.C."/>
            <person name="Losick R."/>
        </authorList>
    </citation>
    <scope>FUNCTION</scope>
    <scope>INDUCTION</scope>
    <scope>DISRUPTION PHENOTYPE</scope>
    <source>
        <strain>168 / PY79</strain>
    </source>
</reference>
<reference key="6">
    <citation type="journal article" date="2005" name="Appl. Environ. Microbiol.">
        <title>Genes involved in SkfA killing factor production protect a Bacillus subtilis lipase against proteolysis.</title>
        <authorList>
            <person name="Westers H."/>
            <person name="Braun P.G."/>
            <person name="Westers L."/>
            <person name="Antelmann H."/>
            <person name="Hecker M."/>
            <person name="Jongbloed J.D.H."/>
            <person name="Yoshikawa H."/>
            <person name="Tanaka T."/>
            <person name="van Dijl J.M."/>
            <person name="Quax W.J."/>
        </authorList>
    </citation>
    <scope>ROLE IN LIPASE PRODUCTION</scope>
    <source>
        <strain>168</strain>
    </source>
</reference>
<reference key="7">
    <citation type="journal article" date="2005" name="J. Bacteriol.">
        <title>High- and low-threshold genes in the Spo0A regulon of Bacillus subtilis.</title>
        <authorList>
            <person name="Fujita M."/>
            <person name="Gonzalez-Pastor J.E."/>
            <person name="Losick R."/>
        </authorList>
    </citation>
    <scope>REPRESSION BY ABRB</scope>
</reference>
<reference key="8">
    <citation type="journal article" date="2006" name="J. Bacteriol.">
        <title>Phosphate starvation induces the sporulation killing factor of Bacillus subtilis.</title>
        <authorList>
            <person name="Allenby N.E.E."/>
            <person name="Watts C.A."/>
            <person name="Homuth G."/>
            <person name="Pragai Z."/>
            <person name="Wipat A."/>
            <person name="Ward A.C."/>
            <person name="Harwood C.R."/>
        </authorList>
    </citation>
    <scope>INDUCTION BY PHOSPHATE STARVATION</scope>
    <source>
        <strain>168</strain>
    </source>
</reference>
<reference key="9">
    <citation type="journal article" date="2007" name="J. Bacteriol.">
        <title>Abh and AbrB control of Bacillus subtilis antimicrobial gene expression.</title>
        <authorList>
            <person name="Strauch M.A."/>
            <person name="Bobay B.G."/>
            <person name="Cavanagh J."/>
            <person name="Yao F."/>
            <person name="Wilson A."/>
            <person name="Le Breton Y."/>
        </authorList>
    </citation>
    <scope>REPRESSION BY ABRB AND ABH</scope>
</reference>
<reference key="10">
    <citation type="journal article" date="2013" name="J. Am. Chem. Soc.">
        <title>Two [4Fe-4S] clusters containing radical SAM enzyme SkfB catalyze thioether bond formation during the maturation of the sporulation killing factor.</title>
        <authorList>
            <person name="Fluehe L."/>
            <person name="Burghaus O."/>
            <person name="Wieckowski B.M."/>
            <person name="Giessen T.W."/>
            <person name="Linne U."/>
            <person name="Marahiel M.A."/>
        </authorList>
    </citation>
    <scope>CROSS-LINK</scope>
    <scope>MUTAGENESIS OF 1-MET--GLY-29; 33-CYS--MET-41; CYS-33 AND MET-41</scope>
    <source>
        <strain>168</strain>
    </source>
</reference>
<protein>
    <recommendedName>
        <fullName evidence="10">Sporulation killing factor</fullName>
        <shortName evidence="10">SKF</shortName>
    </recommendedName>
    <alternativeName>
        <fullName>Sporulation-killing factor SkfA</fullName>
    </alternativeName>
</protein>
<evidence type="ECO:0000269" key="1">
    <source>
    </source>
</evidence>
<evidence type="ECO:0000269" key="2">
    <source>
    </source>
</evidence>
<evidence type="ECO:0000269" key="3">
    <source>
    </source>
</evidence>
<evidence type="ECO:0000269" key="4">
    <source>
    </source>
</evidence>
<evidence type="ECO:0000269" key="5">
    <source>
    </source>
</evidence>
<evidence type="ECO:0000269" key="6">
    <source>
    </source>
</evidence>
<evidence type="ECO:0000269" key="7">
    <source>
    </source>
</evidence>
<evidence type="ECO:0000269" key="8">
    <source>
    </source>
</evidence>
<evidence type="ECO:0000303" key="9">
    <source>
    </source>
</evidence>
<evidence type="ECO:0000303" key="10">
    <source>
    </source>
</evidence>
<evidence type="ECO:0000305" key="11"/>
<feature type="propeptide" id="PRO_0000435140" evidence="7">
    <location>
        <begin position="1"/>
        <end position="29"/>
    </location>
</feature>
<feature type="peptide" id="PRO_0000049459" description="Sporulation killing factor" evidence="7">
    <location>
        <begin position="30"/>
        <end position="55"/>
    </location>
</feature>
<feature type="disulfide bond" evidence="7">
    <location>
        <begin position="30"/>
        <end position="45"/>
    </location>
</feature>
<feature type="cross-link" description="Cyclopeptide (Cys-Ile)" evidence="7">
    <location>
        <begin position="30"/>
        <end position="55"/>
    </location>
</feature>
<feature type="cross-link" description="2-(S-cysteinyl)-methionine (Cys-Met)" evidence="7 8">
    <location>
        <begin position="33"/>
        <end position="41"/>
    </location>
</feature>
<feature type="mutagenesis site" description="Cys-Met cross-link not made." evidence="8">
    <location>
        <begin position="1"/>
        <end position="29"/>
    </location>
</feature>
<feature type="mutagenesis site" description="Cys-Met cross-link not made, suggests relative amino acid positions are important for thioether bond formation." evidence="8">
    <original>CWASKSIAM</original>
    <variation>MWASKSIAC</variation>
    <location>
        <begin position="33"/>
        <end position="41"/>
    </location>
</feature>
<feature type="mutagenesis site" description="Cys-thioether cross-link not made." evidence="8">
    <original>C</original>
    <variation>A</variation>
    <variation>S</variation>
    <location>
        <position position="33"/>
    </location>
</feature>
<feature type="mutagenesis site" description="Approximately wild-type amounts of Cys-thioether cross-link made." evidence="8">
    <original>M</original>
    <variation>A</variation>
    <variation>F</variation>
    <variation>L</variation>
    <variation>Y</variation>
    <location>
        <position position="41"/>
    </location>
</feature>
<feature type="mutagenesis site" description="Cys-thioether cross-link not made." evidence="8">
    <original>M</original>
    <variation>E</variation>
    <variation>K</variation>
    <variation>Q</variation>
    <location>
        <position position="41"/>
    </location>
</feature>
<feature type="mutagenesis site" description="50% wild-type amount of Cys-thioether cross-link made." evidence="8">
    <original>M</original>
    <variation>N</variation>
    <variation>S</variation>
    <variation>T</variation>
    <location>
        <position position="41"/>
    </location>
</feature>
<organism>
    <name type="scientific">Bacillus subtilis (strain 168)</name>
    <dbReference type="NCBI Taxonomy" id="224308"/>
    <lineage>
        <taxon>Bacteria</taxon>
        <taxon>Bacillati</taxon>
        <taxon>Bacillota</taxon>
        <taxon>Bacilli</taxon>
        <taxon>Bacillales</taxon>
        <taxon>Bacillaceae</taxon>
        <taxon>Bacillus</taxon>
    </lineage>
</organism>
<sequence length="55" mass="5934">MKRNQKEWESVSKKGLMKPGGTSIVKAAGCMGCWASKSIAMTRVCALPHPAMRAI</sequence>
<accession>O31422</accession>
<proteinExistence type="evidence at protein level"/>
<gene>
    <name evidence="9" type="primary">skfA</name>
    <name type="synonym">ybcO</name>
    <name type="ordered locus">BSU01910</name>
</gene>
<comment type="function">
    <text evidence="1 2 4 7">Produces a 26-residue extracellular sporulation killing factor (SKF) that induces the lysis of other B.subtilis cells that have not entered the sporulation pathway, providing a source of nutrients to support sporulation, and at the same time delaying commitment to the energetically expensive and irreversible onset of sporulation (PubMed:12817086, PubMed:20805502). Can also inhibit growth of other bacteria at high concentrations (PubMed:11851812). Addition of SKF to solid cultures induces killing, but it is much less effective than SDP (AC O34344) (PubMed:20805502). Has a role in protecting the secreted lipase LipA against proteolysis, either by modulating its folding or by acting as a protease inhibitor (PubMed:15812018).</text>
</comment>
<comment type="subcellular location">
    <subcellularLocation>
        <location evidence="7">Secreted</location>
    </subcellularLocation>
    <text evidence="11">Probably secreted by the ABC transporter SkfEF.</text>
</comment>
<comment type="induction">
    <text evidence="2 3 5 6">By Spo0A (PubMed:12817086) and PhoP (PubMed:16816204), during nutrient starvation, especially phosphate starvation. Repressed by AbrB during normal growth when nutrients are plentiful, in association with the transcriptional repressor Abh.</text>
</comment>
<comment type="PTM">
    <text evidence="7 8">This is a cyclic peptide (PubMed:20805502, PubMed:23282011). The first step in SKF maturation is probably thioether bond formation (PubMed:23282011).</text>
</comment>
<comment type="mass spectrometry" mass="2781.302" method="MALDI" evidence="7">
    <text>Cyclic, disulfide-containing sactipeptide with a thioether cross-link of cysteine to methionine.</text>
</comment>
<comment type="disruption phenotype">
    <text evidence="2 7">When the skfA-skfB-skfC-skfE-skfF-skfG-skfH operon is deleted, increased rate of spore formation; a double operon deletion (sdpA-sdpC plus skfA-skfH) makes spores even faster (PubMed:12817086). In a single gene deletion no SKP is produced (PubMed:20805502).</text>
</comment>
<comment type="miscellaneous">
    <text evidence="2">Accelerated cannibalism by skf- cells is seen on solid media but not in liquid media.</text>
</comment>
<comment type="online information" name="Protein Spotlight">
    <link uri="https://www.proteinspotlight.org/back_issues/090"/>
    <text>I'll have you for supper - Issue 90 of January 2008</text>
</comment>
<dbReference type="EMBL" id="AB006424">
    <property type="protein sequence ID" value="BAA33086.1"/>
    <property type="molecule type" value="Genomic_DNA"/>
</dbReference>
<dbReference type="EMBL" id="AL009126">
    <property type="protein sequence ID" value="CAB11984.1"/>
    <property type="molecule type" value="Genomic_DNA"/>
</dbReference>
<dbReference type="PIR" id="C69746">
    <property type="entry name" value="C69746"/>
</dbReference>
<dbReference type="RefSeq" id="NP_388072.1">
    <property type="nucleotide sequence ID" value="NC_000964.3"/>
</dbReference>
<dbReference type="RefSeq" id="WP_009966416.1">
    <property type="nucleotide sequence ID" value="NZ_OZ025638.1"/>
</dbReference>
<dbReference type="FunCoup" id="O31422">
    <property type="interactions" value="247"/>
</dbReference>
<dbReference type="STRING" id="224308.BSU01910"/>
<dbReference type="PaxDb" id="224308-BSU01910"/>
<dbReference type="EnsemblBacteria" id="CAB11984">
    <property type="protein sequence ID" value="CAB11984"/>
    <property type="gene ID" value="BSU_01910"/>
</dbReference>
<dbReference type="GeneID" id="938506"/>
<dbReference type="KEGG" id="bsu:BSU01910"/>
<dbReference type="PATRIC" id="fig|224308.179.peg.198"/>
<dbReference type="InParanoid" id="O31422"/>
<dbReference type="OrthoDB" id="2895544at2"/>
<dbReference type="BioCyc" id="BSUB:BSU01910-MONOMER"/>
<dbReference type="Proteomes" id="UP000001570">
    <property type="component" value="Chromosome"/>
</dbReference>
<dbReference type="GO" id="GO:0005576">
    <property type="term" value="C:extracellular region"/>
    <property type="evidence" value="ECO:0007669"/>
    <property type="project" value="UniProtKB-SubCell"/>
</dbReference>
<dbReference type="GO" id="GO:0042742">
    <property type="term" value="P:defense response to bacterium"/>
    <property type="evidence" value="ECO:0007669"/>
    <property type="project" value="UniProtKB-KW"/>
</dbReference>
<dbReference type="GO" id="GO:0031640">
    <property type="term" value="P:killing of cells of another organism"/>
    <property type="evidence" value="ECO:0007669"/>
    <property type="project" value="UniProtKB-KW"/>
</dbReference>
<dbReference type="InterPro" id="IPR030919">
    <property type="entry name" value="RiPP_SkfA"/>
</dbReference>
<dbReference type="NCBIfam" id="TIGR04404">
    <property type="entry name" value="RiPP_SkfA"/>
    <property type="match status" value="1"/>
</dbReference>
<name>SKFA_BACSU</name>
<keyword id="KW-0044">Antibiotic</keyword>
<keyword id="KW-0929">Antimicrobial</keyword>
<keyword id="KW-0078">Bacteriocin</keyword>
<keyword id="KW-0903">Direct protein sequencing</keyword>
<keyword id="KW-1015">Disulfide bond</keyword>
<keyword id="KW-1185">Reference proteome</keyword>
<keyword id="KW-0964">Secreted</keyword>
<keyword id="KW-0883">Thioether bond</keyword>